<feature type="chain" id="PRO_0000289499" description="GTP cyclohydrolase FolE2">
    <location>
        <begin position="1"/>
        <end position="298"/>
    </location>
</feature>
<feature type="site" description="May be catalytically important" evidence="1">
    <location>
        <position position="188"/>
    </location>
</feature>
<accession>A1KT61</accession>
<name>GCH4_NEIMF</name>
<gene>
    <name evidence="1" type="primary">folE2</name>
    <name type="ordered locus">NMC0755</name>
</gene>
<comment type="function">
    <text evidence="1">Converts GTP to 7,8-dihydroneopterin triphosphate.</text>
</comment>
<comment type="catalytic activity">
    <reaction evidence="1">
        <text>GTP + H2O = 7,8-dihydroneopterin 3'-triphosphate + formate + H(+)</text>
        <dbReference type="Rhea" id="RHEA:17473"/>
        <dbReference type="ChEBI" id="CHEBI:15377"/>
        <dbReference type="ChEBI" id="CHEBI:15378"/>
        <dbReference type="ChEBI" id="CHEBI:15740"/>
        <dbReference type="ChEBI" id="CHEBI:37565"/>
        <dbReference type="ChEBI" id="CHEBI:58462"/>
        <dbReference type="EC" id="3.5.4.16"/>
    </reaction>
</comment>
<comment type="pathway">
    <text evidence="1">Cofactor biosynthesis; 7,8-dihydroneopterin triphosphate biosynthesis; 7,8-dihydroneopterin triphosphate from GTP: step 1/1.</text>
</comment>
<comment type="similarity">
    <text evidence="1">Belongs to the GTP cyclohydrolase IV family.</text>
</comment>
<comment type="sequence caution" evidence="2">
    <conflict type="erroneous initiation">
        <sequence resource="EMBL-CDS" id="CAM10043"/>
    </conflict>
</comment>
<sequence>MQLLKASDIISHLQIDGIFPGGNAIPCTHLNNYMNIKEKQLMNTIADVQSSRDLRNLPINQVGIKDLRFPITLQTAEGIQSTIARLTMTVYLPAEQKGTHMSRFVALMEQHAEALDFAQLRKLTTEMVALLDSRAGKISVSFPFFRKKTAPVSGIRSLLDYDVCLTGEIKDGAYGHSMKVMIPVTSLCPCSKEISQYGAHNQRSHVTVSLTADAEVGIEEVIDYVEAQASCQLYGLLKRPDEKYVTEKAYENPKFVEDMVRDVATSLIADKRIKSFVVESENFESIHNHSAYAYIAYP</sequence>
<keyword id="KW-0378">Hydrolase</keyword>
<evidence type="ECO:0000255" key="1">
    <source>
        <dbReference type="HAMAP-Rule" id="MF_01527"/>
    </source>
</evidence>
<evidence type="ECO:0000305" key="2"/>
<organism>
    <name type="scientific">Neisseria meningitidis serogroup C / serotype 2a (strain ATCC 700532 / DSM 15464 / FAM18)</name>
    <dbReference type="NCBI Taxonomy" id="272831"/>
    <lineage>
        <taxon>Bacteria</taxon>
        <taxon>Pseudomonadati</taxon>
        <taxon>Pseudomonadota</taxon>
        <taxon>Betaproteobacteria</taxon>
        <taxon>Neisseriales</taxon>
        <taxon>Neisseriaceae</taxon>
        <taxon>Neisseria</taxon>
    </lineage>
</organism>
<proteinExistence type="inferred from homology"/>
<dbReference type="EC" id="3.5.4.16" evidence="1"/>
<dbReference type="EMBL" id="AM421808">
    <property type="protein sequence ID" value="CAM10043.1"/>
    <property type="status" value="ALT_INIT"/>
    <property type="molecule type" value="Genomic_DNA"/>
</dbReference>
<dbReference type="SMR" id="A1KT61"/>
<dbReference type="KEGG" id="nmc:NMC0755"/>
<dbReference type="HOGENOM" id="CLU_062816_1_1_4"/>
<dbReference type="UniPathway" id="UPA00848">
    <property type="reaction ID" value="UER00151"/>
</dbReference>
<dbReference type="Proteomes" id="UP000002286">
    <property type="component" value="Chromosome"/>
</dbReference>
<dbReference type="GO" id="GO:0003934">
    <property type="term" value="F:GTP cyclohydrolase I activity"/>
    <property type="evidence" value="ECO:0007669"/>
    <property type="project" value="UniProtKB-UniRule"/>
</dbReference>
<dbReference type="GO" id="GO:0046654">
    <property type="term" value="P:tetrahydrofolate biosynthetic process"/>
    <property type="evidence" value="ECO:0007669"/>
    <property type="project" value="UniProtKB-UniRule"/>
</dbReference>
<dbReference type="Gene3D" id="3.10.270.10">
    <property type="entry name" value="Urate Oxidase"/>
    <property type="match status" value="1"/>
</dbReference>
<dbReference type="HAMAP" id="MF_01527_B">
    <property type="entry name" value="GTP_cyclohydrol_B"/>
    <property type="match status" value="1"/>
</dbReference>
<dbReference type="InterPro" id="IPR022838">
    <property type="entry name" value="GTP_cyclohydrolase_FolE2"/>
</dbReference>
<dbReference type="InterPro" id="IPR003801">
    <property type="entry name" value="GTP_cyclohydrolase_FolE2/MptA"/>
</dbReference>
<dbReference type="NCBIfam" id="NF010200">
    <property type="entry name" value="PRK13674.1-1"/>
    <property type="match status" value="1"/>
</dbReference>
<dbReference type="PANTHER" id="PTHR36445">
    <property type="entry name" value="GTP CYCLOHYDROLASE MPTA"/>
    <property type="match status" value="1"/>
</dbReference>
<dbReference type="PANTHER" id="PTHR36445:SF1">
    <property type="entry name" value="GTP CYCLOHYDROLASE MPTA"/>
    <property type="match status" value="1"/>
</dbReference>
<dbReference type="Pfam" id="PF02649">
    <property type="entry name" value="GCHY-1"/>
    <property type="match status" value="1"/>
</dbReference>
<reference key="1">
    <citation type="journal article" date="2007" name="PLoS Genet.">
        <title>Meningococcal genetic variation mechanisms viewed through comparative analysis of serogroup C strain FAM18.</title>
        <authorList>
            <person name="Bentley S.D."/>
            <person name="Vernikos G.S."/>
            <person name="Snyder L.A.S."/>
            <person name="Churcher C."/>
            <person name="Arrowsmith C."/>
            <person name="Chillingworth T."/>
            <person name="Cronin A."/>
            <person name="Davis P.H."/>
            <person name="Holroyd N.E."/>
            <person name="Jagels K."/>
            <person name="Maddison M."/>
            <person name="Moule S."/>
            <person name="Rabbinowitsch E."/>
            <person name="Sharp S."/>
            <person name="Unwin L."/>
            <person name="Whitehead S."/>
            <person name="Quail M.A."/>
            <person name="Achtman M."/>
            <person name="Barrell B.G."/>
            <person name="Saunders N.J."/>
            <person name="Parkhill J."/>
        </authorList>
    </citation>
    <scope>NUCLEOTIDE SEQUENCE [LARGE SCALE GENOMIC DNA]</scope>
    <source>
        <strain>ATCC 700532 / DSM 15464 / FAM18</strain>
    </source>
</reference>
<protein>
    <recommendedName>
        <fullName evidence="1">GTP cyclohydrolase FolE2</fullName>
        <ecNumber evidence="1">3.5.4.16</ecNumber>
    </recommendedName>
</protein>